<evidence type="ECO:0000250" key="1"/>
<evidence type="ECO:0000255" key="2">
    <source>
        <dbReference type="HAMAP-Rule" id="MF_00118"/>
    </source>
</evidence>
<dbReference type="EC" id="3.6.5.3" evidence="2"/>
<dbReference type="EMBL" id="CP000886">
    <property type="protein sequence ID" value="ABX69605.1"/>
    <property type="molecule type" value="Genomic_DNA"/>
</dbReference>
<dbReference type="EMBL" id="CP000886">
    <property type="protein sequence ID" value="ABX70413.1"/>
    <property type="molecule type" value="Genomic_DNA"/>
</dbReference>
<dbReference type="SMR" id="A9MT05"/>
<dbReference type="KEGG" id="spq:SPAB_04288"/>
<dbReference type="KEGG" id="spq:SPAB_05132"/>
<dbReference type="PATRIC" id="fig|1016998.12.peg.4033"/>
<dbReference type="HOGENOM" id="CLU_007265_0_2_6"/>
<dbReference type="BioCyc" id="SENT1016998:SPAB_RS17460-MONOMER"/>
<dbReference type="BioCyc" id="SENT1016998:SPAB_RS20890-MONOMER"/>
<dbReference type="Proteomes" id="UP000008556">
    <property type="component" value="Chromosome"/>
</dbReference>
<dbReference type="GO" id="GO:0005829">
    <property type="term" value="C:cytosol"/>
    <property type="evidence" value="ECO:0007669"/>
    <property type="project" value="TreeGrafter"/>
</dbReference>
<dbReference type="GO" id="GO:0005525">
    <property type="term" value="F:GTP binding"/>
    <property type="evidence" value="ECO:0007669"/>
    <property type="project" value="UniProtKB-UniRule"/>
</dbReference>
<dbReference type="GO" id="GO:0003924">
    <property type="term" value="F:GTPase activity"/>
    <property type="evidence" value="ECO:0007669"/>
    <property type="project" value="InterPro"/>
</dbReference>
<dbReference type="GO" id="GO:0097216">
    <property type="term" value="F:guanosine tetraphosphate binding"/>
    <property type="evidence" value="ECO:0007669"/>
    <property type="project" value="UniProtKB-ARBA"/>
</dbReference>
<dbReference type="GO" id="GO:0003746">
    <property type="term" value="F:translation elongation factor activity"/>
    <property type="evidence" value="ECO:0007669"/>
    <property type="project" value="UniProtKB-UniRule"/>
</dbReference>
<dbReference type="CDD" id="cd01884">
    <property type="entry name" value="EF_Tu"/>
    <property type="match status" value="1"/>
</dbReference>
<dbReference type="CDD" id="cd03697">
    <property type="entry name" value="EFTU_II"/>
    <property type="match status" value="1"/>
</dbReference>
<dbReference type="CDD" id="cd03707">
    <property type="entry name" value="EFTU_III"/>
    <property type="match status" value="1"/>
</dbReference>
<dbReference type="FunFam" id="2.40.30.10:FF:000001">
    <property type="entry name" value="Elongation factor Tu"/>
    <property type="match status" value="1"/>
</dbReference>
<dbReference type="FunFam" id="3.40.50.300:FF:000003">
    <property type="entry name" value="Elongation factor Tu"/>
    <property type="match status" value="1"/>
</dbReference>
<dbReference type="Gene3D" id="3.40.50.300">
    <property type="entry name" value="P-loop containing nucleotide triphosphate hydrolases"/>
    <property type="match status" value="1"/>
</dbReference>
<dbReference type="Gene3D" id="2.40.30.10">
    <property type="entry name" value="Translation factors"/>
    <property type="match status" value="2"/>
</dbReference>
<dbReference type="HAMAP" id="MF_00118_B">
    <property type="entry name" value="EF_Tu_B"/>
    <property type="match status" value="1"/>
</dbReference>
<dbReference type="InterPro" id="IPR041709">
    <property type="entry name" value="EF-Tu_GTP-bd"/>
</dbReference>
<dbReference type="InterPro" id="IPR050055">
    <property type="entry name" value="EF-Tu_GTPase"/>
</dbReference>
<dbReference type="InterPro" id="IPR004161">
    <property type="entry name" value="EFTu-like_2"/>
</dbReference>
<dbReference type="InterPro" id="IPR033720">
    <property type="entry name" value="EFTU_2"/>
</dbReference>
<dbReference type="InterPro" id="IPR031157">
    <property type="entry name" value="G_TR_CS"/>
</dbReference>
<dbReference type="InterPro" id="IPR027417">
    <property type="entry name" value="P-loop_NTPase"/>
</dbReference>
<dbReference type="InterPro" id="IPR005225">
    <property type="entry name" value="Small_GTP-bd"/>
</dbReference>
<dbReference type="InterPro" id="IPR000795">
    <property type="entry name" value="T_Tr_GTP-bd_dom"/>
</dbReference>
<dbReference type="InterPro" id="IPR009000">
    <property type="entry name" value="Transl_B-barrel_sf"/>
</dbReference>
<dbReference type="InterPro" id="IPR009001">
    <property type="entry name" value="Transl_elong_EF1A/Init_IF2_C"/>
</dbReference>
<dbReference type="InterPro" id="IPR004541">
    <property type="entry name" value="Transl_elong_EFTu/EF1A_bac/org"/>
</dbReference>
<dbReference type="InterPro" id="IPR004160">
    <property type="entry name" value="Transl_elong_EFTu/EF1A_C"/>
</dbReference>
<dbReference type="NCBIfam" id="TIGR00485">
    <property type="entry name" value="EF-Tu"/>
    <property type="match status" value="1"/>
</dbReference>
<dbReference type="NCBIfam" id="NF000766">
    <property type="entry name" value="PRK00049.1"/>
    <property type="match status" value="1"/>
</dbReference>
<dbReference type="NCBIfam" id="NF009372">
    <property type="entry name" value="PRK12735.1"/>
    <property type="match status" value="1"/>
</dbReference>
<dbReference type="NCBIfam" id="NF009373">
    <property type="entry name" value="PRK12736.1"/>
    <property type="match status" value="1"/>
</dbReference>
<dbReference type="NCBIfam" id="TIGR00231">
    <property type="entry name" value="small_GTP"/>
    <property type="match status" value="1"/>
</dbReference>
<dbReference type="PANTHER" id="PTHR43721:SF22">
    <property type="entry name" value="ELONGATION FACTOR TU, MITOCHONDRIAL"/>
    <property type="match status" value="1"/>
</dbReference>
<dbReference type="PANTHER" id="PTHR43721">
    <property type="entry name" value="ELONGATION FACTOR TU-RELATED"/>
    <property type="match status" value="1"/>
</dbReference>
<dbReference type="Pfam" id="PF00009">
    <property type="entry name" value="GTP_EFTU"/>
    <property type="match status" value="1"/>
</dbReference>
<dbReference type="Pfam" id="PF03144">
    <property type="entry name" value="GTP_EFTU_D2"/>
    <property type="match status" value="1"/>
</dbReference>
<dbReference type="Pfam" id="PF03143">
    <property type="entry name" value="GTP_EFTU_D3"/>
    <property type="match status" value="1"/>
</dbReference>
<dbReference type="PRINTS" id="PR00315">
    <property type="entry name" value="ELONGATNFCT"/>
</dbReference>
<dbReference type="SUPFAM" id="SSF50465">
    <property type="entry name" value="EF-Tu/eEF-1alpha/eIF2-gamma C-terminal domain"/>
    <property type="match status" value="1"/>
</dbReference>
<dbReference type="SUPFAM" id="SSF52540">
    <property type="entry name" value="P-loop containing nucleoside triphosphate hydrolases"/>
    <property type="match status" value="1"/>
</dbReference>
<dbReference type="SUPFAM" id="SSF50447">
    <property type="entry name" value="Translation proteins"/>
    <property type="match status" value="1"/>
</dbReference>
<dbReference type="PROSITE" id="PS00301">
    <property type="entry name" value="G_TR_1"/>
    <property type="match status" value="1"/>
</dbReference>
<dbReference type="PROSITE" id="PS51722">
    <property type="entry name" value="G_TR_2"/>
    <property type="match status" value="1"/>
</dbReference>
<feature type="chain" id="PRO_0000337515" description="Elongation factor Tu">
    <location>
        <begin position="1"/>
        <end position="394"/>
    </location>
</feature>
<feature type="domain" description="tr-type G">
    <location>
        <begin position="10"/>
        <end position="204"/>
    </location>
</feature>
<feature type="region of interest" description="G1" evidence="1">
    <location>
        <begin position="19"/>
        <end position="26"/>
    </location>
</feature>
<feature type="region of interest" description="G2" evidence="1">
    <location>
        <begin position="60"/>
        <end position="64"/>
    </location>
</feature>
<feature type="region of interest" description="G3" evidence="1">
    <location>
        <begin position="81"/>
        <end position="84"/>
    </location>
</feature>
<feature type="region of interest" description="G4" evidence="1">
    <location>
        <begin position="136"/>
        <end position="139"/>
    </location>
</feature>
<feature type="region of interest" description="G5" evidence="1">
    <location>
        <begin position="174"/>
        <end position="176"/>
    </location>
</feature>
<feature type="binding site" evidence="2">
    <location>
        <begin position="19"/>
        <end position="26"/>
    </location>
    <ligand>
        <name>GTP</name>
        <dbReference type="ChEBI" id="CHEBI:37565"/>
    </ligand>
</feature>
<feature type="binding site" evidence="2">
    <location>
        <position position="26"/>
    </location>
    <ligand>
        <name>Mg(2+)</name>
        <dbReference type="ChEBI" id="CHEBI:18420"/>
    </ligand>
</feature>
<feature type="binding site" evidence="2">
    <location>
        <begin position="81"/>
        <end position="85"/>
    </location>
    <ligand>
        <name>GTP</name>
        <dbReference type="ChEBI" id="CHEBI:37565"/>
    </ligand>
</feature>
<feature type="binding site" evidence="2">
    <location>
        <begin position="136"/>
        <end position="139"/>
    </location>
    <ligand>
        <name>GTP</name>
        <dbReference type="ChEBI" id="CHEBI:37565"/>
    </ligand>
</feature>
<accession>A9MT05</accession>
<sequence>MSKEKFERTKPHVNVGTIGHVDHGKTTLTAAITTVLAKTYGGAARAFDQIDNAPEEKARGITINTSHVEYDTPTRHYAHVDCPGHADYVKNMITGAAQMDGAILVVAATDGPMPQTREHILLGRQVGVPYIIVFLNKCDMVDDEELLELVEMEVRELLSQYDFPGDDTPIVRGSALKALEGDAEWEAKIIELAGFLDSYIPEPERAIDKPFLLPIEDVFSISGRGTVVTGRVERGIIKVGEEVEIVGIKETQKSTCTGVEMFRKLLDEGRAGENVGVLLRGIKREEIERGQVLAKPGTIKPHTKFESEVYILSKDEGGRHTPFFKGYRPQFYFRTTDVTGTIELPEGVEMVMPGDNIKMVVTLIHPIAMDDGLRFAIREGGRTVGAGVVAKVLG</sequence>
<protein>
    <recommendedName>
        <fullName evidence="2">Elongation factor Tu</fullName>
        <shortName evidence="2">EF-Tu</shortName>
        <ecNumber evidence="2">3.6.5.3</ecNumber>
    </recommendedName>
</protein>
<gene>
    <name evidence="2" type="primary">tuf1</name>
    <name type="ordered locus">SPAB_04288</name>
</gene>
<gene>
    <name evidence="2" type="primary">tuf2</name>
    <name type="ordered locus">SPAB_05132</name>
</gene>
<reference key="1">
    <citation type="submission" date="2007-11" db="EMBL/GenBank/DDBJ databases">
        <authorList>
            <consortium name="The Salmonella enterica serovar Paratyphi B Genome Sequencing Project"/>
            <person name="McClelland M."/>
            <person name="Sanderson E.K."/>
            <person name="Porwollik S."/>
            <person name="Spieth J."/>
            <person name="Clifton W.S."/>
            <person name="Fulton R."/>
            <person name="Cordes M."/>
            <person name="Wollam A."/>
            <person name="Shah N."/>
            <person name="Pepin K."/>
            <person name="Bhonagiri V."/>
            <person name="Nash W."/>
            <person name="Johnson M."/>
            <person name="Thiruvilangam P."/>
            <person name="Wilson R."/>
        </authorList>
    </citation>
    <scope>NUCLEOTIDE SEQUENCE [LARGE SCALE GENOMIC DNA]</scope>
    <source>
        <strain>ATCC BAA-1250 / SPB7</strain>
    </source>
</reference>
<name>EFTU_SALPB</name>
<organism>
    <name type="scientific">Salmonella paratyphi B (strain ATCC BAA-1250 / SPB7)</name>
    <dbReference type="NCBI Taxonomy" id="1016998"/>
    <lineage>
        <taxon>Bacteria</taxon>
        <taxon>Pseudomonadati</taxon>
        <taxon>Pseudomonadota</taxon>
        <taxon>Gammaproteobacteria</taxon>
        <taxon>Enterobacterales</taxon>
        <taxon>Enterobacteriaceae</taxon>
        <taxon>Salmonella</taxon>
    </lineage>
</organism>
<proteinExistence type="inferred from homology"/>
<comment type="function">
    <text evidence="2">GTP hydrolase that promotes the GTP-dependent binding of aminoacyl-tRNA to the A-site of ribosomes during protein biosynthesis.</text>
</comment>
<comment type="catalytic activity">
    <reaction evidence="2">
        <text>GTP + H2O = GDP + phosphate + H(+)</text>
        <dbReference type="Rhea" id="RHEA:19669"/>
        <dbReference type="ChEBI" id="CHEBI:15377"/>
        <dbReference type="ChEBI" id="CHEBI:15378"/>
        <dbReference type="ChEBI" id="CHEBI:37565"/>
        <dbReference type="ChEBI" id="CHEBI:43474"/>
        <dbReference type="ChEBI" id="CHEBI:58189"/>
        <dbReference type="EC" id="3.6.5.3"/>
    </reaction>
    <physiologicalReaction direction="left-to-right" evidence="2">
        <dbReference type="Rhea" id="RHEA:19670"/>
    </physiologicalReaction>
</comment>
<comment type="subunit">
    <text evidence="2">Monomer.</text>
</comment>
<comment type="subcellular location">
    <subcellularLocation>
        <location evidence="2">Cytoplasm</location>
    </subcellularLocation>
</comment>
<comment type="similarity">
    <text evidence="2">Belongs to the TRAFAC class translation factor GTPase superfamily. Classic translation factor GTPase family. EF-Tu/EF-1A subfamily.</text>
</comment>
<keyword id="KW-0963">Cytoplasm</keyword>
<keyword id="KW-0251">Elongation factor</keyword>
<keyword id="KW-0342">GTP-binding</keyword>
<keyword id="KW-0378">Hydrolase</keyword>
<keyword id="KW-0460">Magnesium</keyword>
<keyword id="KW-0479">Metal-binding</keyword>
<keyword id="KW-0547">Nucleotide-binding</keyword>
<keyword id="KW-0648">Protein biosynthesis</keyword>